<reference key="1">
    <citation type="journal article" date="2001" name="Proc. Natl. Acad. Sci. U.S.A.">
        <title>Complete genomic sequence of Pasteurella multocida Pm70.</title>
        <authorList>
            <person name="May B.J."/>
            <person name="Zhang Q."/>
            <person name="Li L.L."/>
            <person name="Paustian M.L."/>
            <person name="Whittam T.S."/>
            <person name="Kapur V."/>
        </authorList>
    </citation>
    <scope>NUCLEOTIDE SEQUENCE [LARGE SCALE GENOMIC DNA]</scope>
    <source>
        <strain>Pm70</strain>
    </source>
</reference>
<accession>P57978</accession>
<name>LIPA_PASMU</name>
<sequence length="320" mass="36349">MGTPFKMERGVKYRDAAKTSIIPVKNIDPNQELLKKPEWMKIKLPANSAKIDSIKNGMRRHGLHSVCEEASCPNLHECFNHGTATFMILGAICTRRCPFCDVAHGKPLPPDPEEPRKLAETIQDMKLRYVVITSVDRDDLPDRGAGHFAECVKEIRQLNPNIKIEILVPDFRGRIEQALDKLKDNPPDVFNHNLENVPRLYREIRPGADYQWSLKLLKDFKAMFPHIPTKSGLMVGLGETNEEILQVMQDLRDHGVTMLTLGQYLQPSRHHLPVARYVPPAEFDEFRDKAQAMGFEHAACGPFVRSSYHADLQAKGEIVK</sequence>
<organism>
    <name type="scientific">Pasteurella multocida (strain Pm70)</name>
    <dbReference type="NCBI Taxonomy" id="272843"/>
    <lineage>
        <taxon>Bacteria</taxon>
        <taxon>Pseudomonadati</taxon>
        <taxon>Pseudomonadota</taxon>
        <taxon>Gammaproteobacteria</taxon>
        <taxon>Pasteurellales</taxon>
        <taxon>Pasteurellaceae</taxon>
        <taxon>Pasteurella</taxon>
    </lineage>
</organism>
<evidence type="ECO:0000255" key="1">
    <source>
        <dbReference type="HAMAP-Rule" id="MF_00206"/>
    </source>
</evidence>
<evidence type="ECO:0000255" key="2">
    <source>
        <dbReference type="PROSITE-ProRule" id="PRU01266"/>
    </source>
</evidence>
<proteinExistence type="inferred from homology"/>
<keyword id="KW-0004">4Fe-4S</keyword>
<keyword id="KW-0963">Cytoplasm</keyword>
<keyword id="KW-0408">Iron</keyword>
<keyword id="KW-0411">Iron-sulfur</keyword>
<keyword id="KW-0479">Metal-binding</keyword>
<keyword id="KW-1185">Reference proteome</keyword>
<keyword id="KW-0949">S-adenosyl-L-methionine</keyword>
<keyword id="KW-0808">Transferase</keyword>
<dbReference type="EC" id="2.8.1.8" evidence="1"/>
<dbReference type="EMBL" id="AE004439">
    <property type="protein sequence ID" value="AAK04014.1"/>
    <property type="molecule type" value="Genomic_DNA"/>
</dbReference>
<dbReference type="RefSeq" id="WP_005719422.1">
    <property type="nucleotide sequence ID" value="NC_002663.1"/>
</dbReference>
<dbReference type="SMR" id="P57978"/>
<dbReference type="STRING" id="272843.PM1930"/>
<dbReference type="EnsemblBacteria" id="AAK04014">
    <property type="protein sequence ID" value="AAK04014"/>
    <property type="gene ID" value="PM1930"/>
</dbReference>
<dbReference type="GeneID" id="77207274"/>
<dbReference type="KEGG" id="pmu:PM1930"/>
<dbReference type="HOGENOM" id="CLU_033144_2_1_6"/>
<dbReference type="OrthoDB" id="9787898at2"/>
<dbReference type="UniPathway" id="UPA00538">
    <property type="reaction ID" value="UER00593"/>
</dbReference>
<dbReference type="Proteomes" id="UP000000809">
    <property type="component" value="Chromosome"/>
</dbReference>
<dbReference type="GO" id="GO:0005737">
    <property type="term" value="C:cytoplasm"/>
    <property type="evidence" value="ECO:0007669"/>
    <property type="project" value="UniProtKB-SubCell"/>
</dbReference>
<dbReference type="GO" id="GO:0051539">
    <property type="term" value="F:4 iron, 4 sulfur cluster binding"/>
    <property type="evidence" value="ECO:0007669"/>
    <property type="project" value="UniProtKB-UniRule"/>
</dbReference>
<dbReference type="GO" id="GO:0016992">
    <property type="term" value="F:lipoate synthase activity"/>
    <property type="evidence" value="ECO:0007669"/>
    <property type="project" value="UniProtKB-UniRule"/>
</dbReference>
<dbReference type="GO" id="GO:0046872">
    <property type="term" value="F:metal ion binding"/>
    <property type="evidence" value="ECO:0007669"/>
    <property type="project" value="UniProtKB-KW"/>
</dbReference>
<dbReference type="CDD" id="cd01335">
    <property type="entry name" value="Radical_SAM"/>
    <property type="match status" value="1"/>
</dbReference>
<dbReference type="FunFam" id="3.20.20.70:FF:000023">
    <property type="entry name" value="Lipoyl synthase"/>
    <property type="match status" value="1"/>
</dbReference>
<dbReference type="Gene3D" id="3.20.20.70">
    <property type="entry name" value="Aldolase class I"/>
    <property type="match status" value="1"/>
</dbReference>
<dbReference type="HAMAP" id="MF_00206">
    <property type="entry name" value="Lipoyl_synth"/>
    <property type="match status" value="1"/>
</dbReference>
<dbReference type="InterPro" id="IPR013785">
    <property type="entry name" value="Aldolase_TIM"/>
</dbReference>
<dbReference type="InterPro" id="IPR006638">
    <property type="entry name" value="Elp3/MiaA/NifB-like_rSAM"/>
</dbReference>
<dbReference type="InterPro" id="IPR031691">
    <property type="entry name" value="LIAS_N"/>
</dbReference>
<dbReference type="InterPro" id="IPR003698">
    <property type="entry name" value="Lipoyl_synth"/>
</dbReference>
<dbReference type="InterPro" id="IPR007197">
    <property type="entry name" value="rSAM"/>
</dbReference>
<dbReference type="NCBIfam" id="TIGR00510">
    <property type="entry name" value="lipA"/>
    <property type="match status" value="1"/>
</dbReference>
<dbReference type="NCBIfam" id="NF004019">
    <property type="entry name" value="PRK05481.1"/>
    <property type="match status" value="1"/>
</dbReference>
<dbReference type="NCBIfam" id="NF009544">
    <property type="entry name" value="PRK12928.1"/>
    <property type="match status" value="1"/>
</dbReference>
<dbReference type="PANTHER" id="PTHR10949">
    <property type="entry name" value="LIPOYL SYNTHASE"/>
    <property type="match status" value="1"/>
</dbReference>
<dbReference type="PANTHER" id="PTHR10949:SF0">
    <property type="entry name" value="LIPOYL SYNTHASE, MITOCHONDRIAL"/>
    <property type="match status" value="1"/>
</dbReference>
<dbReference type="Pfam" id="PF16881">
    <property type="entry name" value="LIAS_N"/>
    <property type="match status" value="1"/>
</dbReference>
<dbReference type="Pfam" id="PF04055">
    <property type="entry name" value="Radical_SAM"/>
    <property type="match status" value="1"/>
</dbReference>
<dbReference type="PIRSF" id="PIRSF005963">
    <property type="entry name" value="Lipoyl_synth"/>
    <property type="match status" value="1"/>
</dbReference>
<dbReference type="SFLD" id="SFLDF00271">
    <property type="entry name" value="lipoyl_synthase"/>
    <property type="match status" value="1"/>
</dbReference>
<dbReference type="SFLD" id="SFLDG01058">
    <property type="entry name" value="lipoyl_synthase_like"/>
    <property type="match status" value="1"/>
</dbReference>
<dbReference type="SMART" id="SM00729">
    <property type="entry name" value="Elp3"/>
    <property type="match status" value="1"/>
</dbReference>
<dbReference type="SUPFAM" id="SSF102114">
    <property type="entry name" value="Radical SAM enzymes"/>
    <property type="match status" value="1"/>
</dbReference>
<dbReference type="PROSITE" id="PS51918">
    <property type="entry name" value="RADICAL_SAM"/>
    <property type="match status" value="1"/>
</dbReference>
<gene>
    <name evidence="1" type="primary">lipA</name>
    <name type="ordered locus">PM1930</name>
</gene>
<feature type="chain" id="PRO_0000102332" description="Lipoyl synthase">
    <location>
        <begin position="1"/>
        <end position="320"/>
    </location>
</feature>
<feature type="domain" description="Radical SAM core" evidence="2">
    <location>
        <begin position="79"/>
        <end position="296"/>
    </location>
</feature>
<feature type="binding site" evidence="1">
    <location>
        <position position="67"/>
    </location>
    <ligand>
        <name>[4Fe-4S] cluster</name>
        <dbReference type="ChEBI" id="CHEBI:49883"/>
        <label>1</label>
    </ligand>
</feature>
<feature type="binding site" evidence="1">
    <location>
        <position position="72"/>
    </location>
    <ligand>
        <name>[4Fe-4S] cluster</name>
        <dbReference type="ChEBI" id="CHEBI:49883"/>
        <label>1</label>
    </ligand>
</feature>
<feature type="binding site" evidence="1">
    <location>
        <position position="78"/>
    </location>
    <ligand>
        <name>[4Fe-4S] cluster</name>
        <dbReference type="ChEBI" id="CHEBI:49883"/>
        <label>1</label>
    </ligand>
</feature>
<feature type="binding site" evidence="1">
    <location>
        <position position="93"/>
    </location>
    <ligand>
        <name>[4Fe-4S] cluster</name>
        <dbReference type="ChEBI" id="CHEBI:49883"/>
        <label>2</label>
        <note>4Fe-4S-S-AdoMet</note>
    </ligand>
</feature>
<feature type="binding site" evidence="1">
    <location>
        <position position="97"/>
    </location>
    <ligand>
        <name>[4Fe-4S] cluster</name>
        <dbReference type="ChEBI" id="CHEBI:49883"/>
        <label>2</label>
        <note>4Fe-4S-S-AdoMet</note>
    </ligand>
</feature>
<feature type="binding site" evidence="1">
    <location>
        <position position="100"/>
    </location>
    <ligand>
        <name>[4Fe-4S] cluster</name>
        <dbReference type="ChEBI" id="CHEBI:49883"/>
        <label>2</label>
        <note>4Fe-4S-S-AdoMet</note>
    </ligand>
</feature>
<feature type="binding site" evidence="1">
    <location>
        <position position="307"/>
    </location>
    <ligand>
        <name>[4Fe-4S] cluster</name>
        <dbReference type="ChEBI" id="CHEBI:49883"/>
        <label>1</label>
    </ligand>
</feature>
<protein>
    <recommendedName>
        <fullName evidence="1">Lipoyl synthase</fullName>
        <ecNumber evidence="1">2.8.1.8</ecNumber>
    </recommendedName>
    <alternativeName>
        <fullName evidence="1">Lip-syn</fullName>
        <shortName evidence="1">LS</shortName>
    </alternativeName>
    <alternativeName>
        <fullName evidence="1">Lipoate synthase</fullName>
    </alternativeName>
    <alternativeName>
        <fullName evidence="1">Lipoic acid synthase</fullName>
    </alternativeName>
    <alternativeName>
        <fullName evidence="1">Sulfur insertion protein LipA</fullName>
    </alternativeName>
</protein>
<comment type="function">
    <text evidence="1">Catalyzes the radical-mediated insertion of two sulfur atoms into the C-6 and C-8 positions of the octanoyl moiety bound to the lipoyl domains of lipoate-dependent enzymes, thereby converting the octanoylated domains into lipoylated derivatives.</text>
</comment>
<comment type="catalytic activity">
    <reaction evidence="1">
        <text>[[Fe-S] cluster scaffold protein carrying a second [4Fe-4S](2+) cluster] + N(6)-octanoyl-L-lysyl-[protein] + 2 oxidized [2Fe-2S]-[ferredoxin] + 2 S-adenosyl-L-methionine + 4 H(+) = [[Fe-S] cluster scaffold protein] + N(6)-[(R)-dihydrolipoyl]-L-lysyl-[protein] + 4 Fe(3+) + 2 hydrogen sulfide + 2 5'-deoxyadenosine + 2 L-methionine + 2 reduced [2Fe-2S]-[ferredoxin]</text>
        <dbReference type="Rhea" id="RHEA:16585"/>
        <dbReference type="Rhea" id="RHEA-COMP:9928"/>
        <dbReference type="Rhea" id="RHEA-COMP:10000"/>
        <dbReference type="Rhea" id="RHEA-COMP:10001"/>
        <dbReference type="Rhea" id="RHEA-COMP:10475"/>
        <dbReference type="Rhea" id="RHEA-COMP:14568"/>
        <dbReference type="Rhea" id="RHEA-COMP:14569"/>
        <dbReference type="ChEBI" id="CHEBI:15378"/>
        <dbReference type="ChEBI" id="CHEBI:17319"/>
        <dbReference type="ChEBI" id="CHEBI:29034"/>
        <dbReference type="ChEBI" id="CHEBI:29919"/>
        <dbReference type="ChEBI" id="CHEBI:33722"/>
        <dbReference type="ChEBI" id="CHEBI:33737"/>
        <dbReference type="ChEBI" id="CHEBI:33738"/>
        <dbReference type="ChEBI" id="CHEBI:57844"/>
        <dbReference type="ChEBI" id="CHEBI:59789"/>
        <dbReference type="ChEBI" id="CHEBI:78809"/>
        <dbReference type="ChEBI" id="CHEBI:83100"/>
        <dbReference type="EC" id="2.8.1.8"/>
    </reaction>
</comment>
<comment type="cofactor">
    <cofactor evidence="1">
        <name>[4Fe-4S] cluster</name>
        <dbReference type="ChEBI" id="CHEBI:49883"/>
    </cofactor>
    <text evidence="1">Binds 2 [4Fe-4S] clusters per subunit. One cluster is coordinated with 3 cysteines and an exchangeable S-adenosyl-L-methionine.</text>
</comment>
<comment type="pathway">
    <text evidence="1">Protein modification; protein lipoylation via endogenous pathway; protein N(6)-(lipoyl)lysine from octanoyl-[acyl-carrier-protein]: step 2/2.</text>
</comment>
<comment type="subcellular location">
    <subcellularLocation>
        <location evidence="1">Cytoplasm</location>
    </subcellularLocation>
</comment>
<comment type="similarity">
    <text evidence="1">Belongs to the radical SAM superfamily. Lipoyl synthase family.</text>
</comment>